<organism>
    <name type="scientific">Exiguobacterium sibiricum (strain DSM 17290 / CCUG 55495 / CIP 109462 / JCM 13490 / 255-15)</name>
    <dbReference type="NCBI Taxonomy" id="262543"/>
    <lineage>
        <taxon>Bacteria</taxon>
        <taxon>Bacillati</taxon>
        <taxon>Bacillota</taxon>
        <taxon>Bacilli</taxon>
        <taxon>Bacillales</taxon>
        <taxon>Bacillales Family XII. Incertae Sedis</taxon>
        <taxon>Exiguobacterium</taxon>
    </lineage>
</organism>
<comment type="function">
    <text evidence="2">With S4 and S5 plays an important role in translational accuracy.</text>
</comment>
<comment type="function">
    <text evidence="2">Interacts with and stabilizes bases of the 16S rRNA that are involved in tRNA selection in the A site and with the mRNA backbone. Located at the interface of the 30S and 50S subunits, it traverses the body of the 30S subunit contacting proteins on the other side and probably holding the rRNA structure together. The combined cluster of proteins S8, S12 and S17 appears to hold together the shoulder and platform of the 30S subunit.</text>
</comment>
<comment type="subunit">
    <text evidence="2">Part of the 30S ribosomal subunit. Contacts proteins S8 and S17. May interact with IF1 in the 30S initiation complex.</text>
</comment>
<comment type="similarity">
    <text evidence="2">Belongs to the universal ribosomal protein uS12 family.</text>
</comment>
<dbReference type="EMBL" id="CP001022">
    <property type="protein sequence ID" value="ACB59578.1"/>
    <property type="molecule type" value="Genomic_DNA"/>
</dbReference>
<dbReference type="RefSeq" id="WP_012369004.1">
    <property type="nucleotide sequence ID" value="NC_010556.1"/>
</dbReference>
<dbReference type="SMR" id="B1YGU5"/>
<dbReference type="STRING" id="262543.Exig_0091"/>
<dbReference type="KEGG" id="esi:Exig_0091"/>
<dbReference type="eggNOG" id="COG0048">
    <property type="taxonomic scope" value="Bacteria"/>
</dbReference>
<dbReference type="HOGENOM" id="CLU_104295_1_2_9"/>
<dbReference type="OrthoDB" id="9802366at2"/>
<dbReference type="Proteomes" id="UP000001681">
    <property type="component" value="Chromosome"/>
</dbReference>
<dbReference type="GO" id="GO:0015935">
    <property type="term" value="C:small ribosomal subunit"/>
    <property type="evidence" value="ECO:0007669"/>
    <property type="project" value="InterPro"/>
</dbReference>
<dbReference type="GO" id="GO:0019843">
    <property type="term" value="F:rRNA binding"/>
    <property type="evidence" value="ECO:0007669"/>
    <property type="project" value="UniProtKB-UniRule"/>
</dbReference>
<dbReference type="GO" id="GO:0003735">
    <property type="term" value="F:structural constituent of ribosome"/>
    <property type="evidence" value="ECO:0007669"/>
    <property type="project" value="InterPro"/>
</dbReference>
<dbReference type="GO" id="GO:0000049">
    <property type="term" value="F:tRNA binding"/>
    <property type="evidence" value="ECO:0007669"/>
    <property type="project" value="UniProtKB-UniRule"/>
</dbReference>
<dbReference type="GO" id="GO:0006412">
    <property type="term" value="P:translation"/>
    <property type="evidence" value="ECO:0007669"/>
    <property type="project" value="UniProtKB-UniRule"/>
</dbReference>
<dbReference type="CDD" id="cd03368">
    <property type="entry name" value="Ribosomal_S12"/>
    <property type="match status" value="1"/>
</dbReference>
<dbReference type="FunFam" id="2.40.50.140:FF:000001">
    <property type="entry name" value="30S ribosomal protein S12"/>
    <property type="match status" value="1"/>
</dbReference>
<dbReference type="Gene3D" id="2.40.50.140">
    <property type="entry name" value="Nucleic acid-binding proteins"/>
    <property type="match status" value="1"/>
</dbReference>
<dbReference type="HAMAP" id="MF_00403_B">
    <property type="entry name" value="Ribosomal_uS12_B"/>
    <property type="match status" value="1"/>
</dbReference>
<dbReference type="InterPro" id="IPR012340">
    <property type="entry name" value="NA-bd_OB-fold"/>
</dbReference>
<dbReference type="InterPro" id="IPR006032">
    <property type="entry name" value="Ribosomal_uS12"/>
</dbReference>
<dbReference type="InterPro" id="IPR005679">
    <property type="entry name" value="Ribosomal_uS12_bac"/>
</dbReference>
<dbReference type="NCBIfam" id="TIGR00981">
    <property type="entry name" value="rpsL_bact"/>
    <property type="match status" value="1"/>
</dbReference>
<dbReference type="PANTHER" id="PTHR11652">
    <property type="entry name" value="30S RIBOSOMAL PROTEIN S12 FAMILY MEMBER"/>
    <property type="match status" value="1"/>
</dbReference>
<dbReference type="Pfam" id="PF00164">
    <property type="entry name" value="Ribosom_S12_S23"/>
    <property type="match status" value="1"/>
</dbReference>
<dbReference type="PRINTS" id="PR01034">
    <property type="entry name" value="RIBOSOMALS12"/>
</dbReference>
<dbReference type="SUPFAM" id="SSF50249">
    <property type="entry name" value="Nucleic acid-binding proteins"/>
    <property type="match status" value="1"/>
</dbReference>
<dbReference type="PROSITE" id="PS00055">
    <property type="entry name" value="RIBOSOMAL_S12"/>
    <property type="match status" value="1"/>
</dbReference>
<feature type="chain" id="PRO_1000194169" description="Small ribosomal subunit protein uS12">
    <location>
        <begin position="1"/>
        <end position="140"/>
    </location>
</feature>
<feature type="region of interest" description="Disordered" evidence="3">
    <location>
        <begin position="1"/>
        <end position="20"/>
    </location>
</feature>
<feature type="region of interest" description="Disordered" evidence="3">
    <location>
        <begin position="121"/>
        <end position="140"/>
    </location>
</feature>
<feature type="compositionally biased region" description="Basic residues" evidence="3">
    <location>
        <begin position="130"/>
        <end position="140"/>
    </location>
</feature>
<feature type="modified residue" description="3-methylthioaspartic acid" evidence="1">
    <location>
        <position position="102"/>
    </location>
</feature>
<accession>B1YGU5</accession>
<reference key="1">
    <citation type="submission" date="2008-04" db="EMBL/GenBank/DDBJ databases">
        <title>Complete sequence of chromosome of Exiguobacterium sibiricum 255-15.</title>
        <authorList>
            <consortium name="US DOE Joint Genome Institute"/>
            <person name="Copeland A."/>
            <person name="Lucas S."/>
            <person name="Lapidus A."/>
            <person name="Glavina del Rio T."/>
            <person name="Dalin E."/>
            <person name="Tice H."/>
            <person name="Bruce D."/>
            <person name="Goodwin L."/>
            <person name="Pitluck S."/>
            <person name="Kiss H."/>
            <person name="Chertkov O."/>
            <person name="Monk C."/>
            <person name="Brettin T."/>
            <person name="Detter J.C."/>
            <person name="Han C."/>
            <person name="Kuske C.R."/>
            <person name="Schmutz J."/>
            <person name="Larimer F."/>
            <person name="Land M."/>
            <person name="Hauser L."/>
            <person name="Kyrpides N."/>
            <person name="Mikhailova N."/>
            <person name="Vishnivetskaya T."/>
            <person name="Rodrigues D.F."/>
            <person name="Gilichinsky D."/>
            <person name="Tiedje J."/>
            <person name="Richardson P."/>
        </authorList>
    </citation>
    <scope>NUCLEOTIDE SEQUENCE [LARGE SCALE GENOMIC DNA]</scope>
    <source>
        <strain>DSM 17290 / CCUG 55495 / CIP 109462 / JCM 13490 / 255-15</strain>
    </source>
</reference>
<gene>
    <name evidence="2" type="primary">rpsL</name>
    <name type="ordered locus">Exig_0091</name>
</gene>
<sequence length="140" mass="15441">MPTINQLVRKGRQSKVVKSDSPALNKGYNSFIKARTDISSPQKRGVCTRVGTMTPKKPNSALRKYARVRLTNTMEVTAYIPGIGHNLQEHSVVLIRGGRVKDLPGVRYHIVRGALDTAGVDGRMQGRSKYGTKRPKAAKK</sequence>
<evidence type="ECO:0000250" key="1"/>
<evidence type="ECO:0000255" key="2">
    <source>
        <dbReference type="HAMAP-Rule" id="MF_00403"/>
    </source>
</evidence>
<evidence type="ECO:0000256" key="3">
    <source>
        <dbReference type="SAM" id="MobiDB-lite"/>
    </source>
</evidence>
<evidence type="ECO:0000305" key="4"/>
<name>RS12_EXIS2</name>
<protein>
    <recommendedName>
        <fullName evidence="2">Small ribosomal subunit protein uS12</fullName>
    </recommendedName>
    <alternativeName>
        <fullName evidence="4">30S ribosomal protein S12</fullName>
    </alternativeName>
</protein>
<proteinExistence type="inferred from homology"/>
<keyword id="KW-0488">Methylation</keyword>
<keyword id="KW-1185">Reference proteome</keyword>
<keyword id="KW-0687">Ribonucleoprotein</keyword>
<keyword id="KW-0689">Ribosomal protein</keyword>
<keyword id="KW-0694">RNA-binding</keyword>
<keyword id="KW-0699">rRNA-binding</keyword>
<keyword id="KW-0820">tRNA-binding</keyword>